<sequence>MKWLGESKNMVVNGRRNGGKLSNDHQQNQSKLQHTGKDTLKAGKNAVERRSNRCNGNSGFEGQSRYVPSSGMSAKELCENDDLATSLVLDPYLGFQTHKMNTSAFPSRSSRHFSKSDSFSHNNPVRFRPIKGRQEELKEVIERFKKDEHLEKAFKCLTSGEWARHYFLNKNKMQEKLFKEHVFIYLRMFATDSGFEILPCNRYSSEQNGAKIVATKEWKRNDKIELLVGCIAELSEIEENMLLRHGENDFSVMYSTRKNCAQLWLGPAAFINHDCRPNCKFVSTGRDTACVKALRDIEPGEEISCYYGDGFFGENNEFCECYTCERRGTGAFKSRVGLPAPAPVINSKYGLRETDKRLNRLKKLGDSSKNSDSQSVSSNTDADTTQEKNNATSNRKSSVGVKKNSKSRTLTRQSMSRIPASSNSTSSKLTHINNSRVPKKLKKPAKPLLSKIKLRNHCKRLEQKNASRKLEMGNLVLKEPKVVLYKNLPIKKDKEPEGPAQAAVASGCLTRHAAREHRQNPVRGAHSQGESSPCTYITRRSVRTRTNLKEASDIKLEPNTLNGYKSSVTEPCPDSGEQLQPAPVLQEEELAHETAQKGEAKCHKSDTGMSKKKSRQGKLVKQFAKIEESTPVHDSPGKDDAVPDLMGPHSDQGEHSGTVGVPVSYTDCAPSPVGCSVVTSDSFKTKDSFRTAKSKKKRRITRYDAQLILENNSGIPKLTLRRRHDSSSKTNDQENDGMNSSKISIKLSKDHDNDNNLYVAKLNNGFNSGSGSSSTKLKIQLKRDEENRGSYTEGLHENGVCCSDPLSLLESRMEVDDYSQYEEESTDDSSSSEGDEEEDDYDDDFEDDFIPLPPAKRLRLIVGKDSIDIDISSRRREDQSLRLNA</sequence>
<evidence type="ECO:0000250" key="1"/>
<evidence type="ECO:0000250" key="2">
    <source>
        <dbReference type="UniProtKB" id="Q3U8K7"/>
    </source>
</evidence>
<evidence type="ECO:0000255" key="3">
    <source>
        <dbReference type="PROSITE-ProRule" id="PRU00190"/>
    </source>
</evidence>
<evidence type="ECO:0000255" key="4">
    <source>
        <dbReference type="PROSITE-ProRule" id="PRU00903"/>
    </source>
</evidence>
<evidence type="ECO:0000256" key="5">
    <source>
        <dbReference type="SAM" id="MobiDB-lite"/>
    </source>
</evidence>
<evidence type="ECO:0000269" key="6">
    <source>
    </source>
</evidence>
<evidence type="ECO:0000269" key="7">
    <source>
    </source>
</evidence>
<evidence type="ECO:0000269" key="8">
    <source>
    </source>
</evidence>
<evidence type="ECO:0000269" key="9">
    <source>
    </source>
</evidence>
<evidence type="ECO:0000269" key="10">
    <source>
    </source>
</evidence>
<evidence type="ECO:0000269" key="11">
    <source>
    </source>
</evidence>
<evidence type="ECO:0000269" key="12">
    <source>
    </source>
</evidence>
<evidence type="ECO:0000269" key="13">
    <source ref="14"/>
</evidence>
<evidence type="ECO:0000303" key="14">
    <source>
    </source>
</evidence>
<evidence type="ECO:0000303" key="15">
    <source>
    </source>
</evidence>
<evidence type="ECO:0000305" key="16"/>
<evidence type="ECO:0000312" key="17">
    <source>
        <dbReference type="HGNC" id="HGNC:24283"/>
    </source>
</evidence>
<evidence type="ECO:0007744" key="18">
    <source>
        <dbReference type="PDB" id="3S8P"/>
    </source>
</evidence>
<evidence type="ECO:0007744" key="19">
    <source>
        <dbReference type="PDB" id="5CPR"/>
    </source>
</evidence>
<evidence type="ECO:0007744" key="20">
    <source>
        <dbReference type="PDB" id="5WBV"/>
    </source>
</evidence>
<evidence type="ECO:0007744" key="21">
    <source>
    </source>
</evidence>
<evidence type="ECO:0007744" key="22">
    <source>
    </source>
</evidence>
<evidence type="ECO:0007744" key="23">
    <source>
    </source>
</evidence>
<evidence type="ECO:0007829" key="24">
    <source>
        <dbReference type="PDB" id="3S8P"/>
    </source>
</evidence>
<evidence type="ECO:0007829" key="25">
    <source>
        <dbReference type="PDB" id="8T9H"/>
    </source>
</evidence>
<comment type="function">
    <text evidence="2 8 9 10">Histone methyltransferase that specifically methylates monomethylated 'Lys-20' (H4K20me1) and dimethylated 'Lys-20' (H4K20me2) of histone H4 to produce respectively dimethylated 'Lys-20' (H4K20me2) and trimethylated 'Lys-20' (H4K20me3) and thus regulates transcription and maintenance of genome integrity (PubMed:24396869, PubMed:28114273). In vitro also methylates unmodified 'Lys-20' (H4K20me0) of histone H4 and nucleosomes (PubMed:24396869). H4 'Lys-20' trimethylation represents a specific tag for epigenetic transcriptional repression. Mainly functions in pericentric heterochromatin regions, thereby playing a central role in the establishment of constitutive heterochromatin in these regions. KMT5B is targeted to histone H3 via its interaction with RB1 family proteins (RB1, RBL1 and RBL2) (By similarity). Plays a role in myogenesis by regulating the expression of target genes, such as EID3 (PubMed:23720823). Facilitates TP53BP1 foci formation upon DNA damage and proficient non-homologous end-joining (NHEJ)-directed DNA repair by catalyzing the di- and trimethylation of 'Lys-20' of histone H4 (PubMed:28114273). May play a role in class switch reconbination by catalyzing the di- and trimethylation of 'Lys-20' of histone H4 (By similarity).</text>
</comment>
<comment type="catalytic activity">
    <reaction evidence="9 10">
        <text>N(6)-methyl-L-lysyl(20)-[histone H4] + S-adenosyl-L-methionine = N(6),N(6)-dimethyl-L-lysyl(20)-[histone H4] + S-adenosyl-L-homocysteine + H(+)</text>
        <dbReference type="Rhea" id="RHEA:60348"/>
        <dbReference type="Rhea" id="RHEA-COMP:15555"/>
        <dbReference type="Rhea" id="RHEA-COMP:15556"/>
        <dbReference type="ChEBI" id="CHEBI:15378"/>
        <dbReference type="ChEBI" id="CHEBI:57856"/>
        <dbReference type="ChEBI" id="CHEBI:59789"/>
        <dbReference type="ChEBI" id="CHEBI:61929"/>
        <dbReference type="ChEBI" id="CHEBI:61976"/>
        <dbReference type="EC" id="2.1.1.362"/>
    </reaction>
    <physiologicalReaction direction="left-to-right" evidence="10">
        <dbReference type="Rhea" id="RHEA:60349"/>
    </physiologicalReaction>
</comment>
<comment type="catalytic activity">
    <reaction evidence="10">
        <text>N(6),N(6)-dimethyl-L-lysyl(20)-[histone H4] + S-adenosyl-L-methionine = N(6),N(6),N(6)-trimethyl-L-lysyl(20)-[histone H4] + S-adenosyl-L-homocysteine + H(+)</text>
        <dbReference type="Rhea" id="RHEA:61992"/>
        <dbReference type="Rhea" id="RHEA-COMP:15556"/>
        <dbReference type="Rhea" id="RHEA-COMP:15998"/>
        <dbReference type="ChEBI" id="CHEBI:15378"/>
        <dbReference type="ChEBI" id="CHEBI:57856"/>
        <dbReference type="ChEBI" id="CHEBI:59789"/>
        <dbReference type="ChEBI" id="CHEBI:61961"/>
        <dbReference type="ChEBI" id="CHEBI:61976"/>
    </reaction>
    <physiologicalReaction direction="left-to-right" evidence="10">
        <dbReference type="Rhea" id="RHEA:61993"/>
    </physiologicalReaction>
</comment>
<comment type="catalytic activity">
    <reaction evidence="9">
        <text>L-lysyl(20)-[histone H4] + S-adenosyl-L-methionine = N(6)-methyl-L-lysyl(20)-[histone H4] + S-adenosyl-L-homocysteine + H(+)</text>
        <dbReference type="Rhea" id="RHEA:60344"/>
        <dbReference type="Rhea" id="RHEA-COMP:15554"/>
        <dbReference type="Rhea" id="RHEA-COMP:15555"/>
        <dbReference type="ChEBI" id="CHEBI:15378"/>
        <dbReference type="ChEBI" id="CHEBI:29969"/>
        <dbReference type="ChEBI" id="CHEBI:57856"/>
        <dbReference type="ChEBI" id="CHEBI:59789"/>
        <dbReference type="ChEBI" id="CHEBI:61929"/>
        <dbReference type="EC" id="2.1.1.361"/>
    </reaction>
    <physiologicalReaction direction="left-to-right" evidence="9">
        <dbReference type="Rhea" id="RHEA:60345"/>
    </physiologicalReaction>
</comment>
<comment type="activity regulation">
    <text evidence="10">Inhibited by 6,7-Dichloro-N-cyclopentyl-4-(pyridin-4-yl)phthalazin-1-amine (A-196) with an IC(50) of 25 nM. A-196 is competitive with the histone peptide substrate H4K20me1 but non competitive with S-adenosyl-L-methionine.</text>
</comment>
<comment type="biophysicochemical properties">
    <kinetics>
        <KM evidence="9">3.4 uM for H4K20me0</KM>
        <KM evidence="9">1.7 uM for H4K20me1</KM>
        <KM evidence="9">0.3 uM for nucleosome</KM>
    </kinetics>
    <phDependence>
        <text evidence="13">Optimum pH is 8.</text>
    </phDependence>
</comment>
<comment type="subunit">
    <text evidence="1 8 9 13">Homodimer (PubMed:24396869, Ref.14). Interacts with HP1 proteins CBX1, CBX3 and CBX5. Interacts with RB1 family proteins RB1, RBL1 and RBL2 (By similarity). Interacts (via C-terminus) with FRG1.</text>
</comment>
<comment type="interaction">
    <interactant intactId="EBI-1047962">
        <id>Q4FZB7</id>
    </interactant>
    <interactant intactId="EBI-947459">
        <id>Q9H2G4</id>
        <label>TSPYL2</label>
    </interactant>
    <organismsDiffer>false</organismsDiffer>
    <experiments>3</experiments>
</comment>
<comment type="interaction">
    <interactant intactId="EBI-15746366">
        <id>Q4FZB7-1</id>
    </interactant>
    <interactant intactId="EBI-688662">
        <id>Q61026</id>
        <label>Ncoa2</label>
    </interactant>
    <organismsDiffer>true</organismsDiffer>
    <experiments>4</experiments>
</comment>
<comment type="subcellular location">
    <subcellularLocation>
        <location evidence="8">Nucleus</location>
    </subcellularLocation>
    <subcellularLocation>
        <location evidence="1">Chromosome</location>
    </subcellularLocation>
    <text evidence="1">Associated with pericentric heterochromatin. CBX1 and CBX5 are required for the localization to pericentric heterochromatin (By similarity).</text>
</comment>
<comment type="alternative products">
    <event type="alternative splicing"/>
    <isoform>
        <id>Q4FZB7-1</id>
        <name>1</name>
        <sequence type="displayed"/>
    </isoform>
    <isoform>
        <id>Q4FZB7-2</id>
        <name>2</name>
        <sequence type="described" ref="VSP_024051 VSP_024052"/>
    </isoform>
    <isoform>
        <id>Q4FZB7-4</id>
        <name>3</name>
        <sequence type="described" ref="VSP_040034 VSP_040035"/>
    </isoform>
</comment>
<comment type="induction">
    <text evidence="7">Strongly down-regulated in breast cancer cells.</text>
</comment>
<comment type="disease" evidence="11 12">
    <disease id="DI-05152">
        <name>Intellectual developmental disorder, autosomal dominant 51</name>
        <acronym>MRD51</acronym>
        <description>A disorder characterized by significantly below average general intellectual functioning associated with impairments in adaptive behavior and manifested during the developmental period.</description>
        <dbReference type="MIM" id="617788"/>
    </disease>
    <text>The disease is caused by variants affecting the gene represented in this entry.</text>
</comment>
<comment type="similarity">
    <text evidence="4">Belongs to the class V-like SAM-binding methyltransferase superfamily. Histone-lysine methyltransferase family. Suvar4-20 subfamily.</text>
</comment>
<comment type="sequence caution" evidence="16">
    <conflict type="erroneous initiation">
        <sequence resource="EMBL-CDS" id="AAD34080"/>
    </conflict>
    <text>Truncated N-terminus.</text>
</comment>
<comment type="sequence caution" evidence="16">
    <conflict type="frameshift">
        <sequence resource="EMBL-CDS" id="AAG36937"/>
    </conflict>
</comment>
<comment type="sequence caution" evidence="16">
    <conflict type="erroneous translation">
        <sequence resource="EMBL-CDS" id="AAH98121"/>
    </conflict>
    <text>Wrong choice of frame.</text>
</comment>
<comment type="sequence caution" evidence="16">
    <conflict type="frameshift">
        <sequence resource="EMBL-CDS" id="AAI04484"/>
    </conflict>
</comment>
<comment type="sequence caution" evidence="16">
    <conflict type="erroneous initiation">
        <sequence resource="EMBL-CDS" id="BAA90905"/>
    </conflict>
    <text>Truncated N-terminus.</text>
</comment>
<reference key="1">
    <citation type="journal article" date="2006" name="Nature">
        <title>Human chromosome 11 DNA sequence and analysis including novel gene identification.</title>
        <authorList>
            <person name="Taylor T.D."/>
            <person name="Noguchi H."/>
            <person name="Totoki Y."/>
            <person name="Toyoda A."/>
            <person name="Kuroki Y."/>
            <person name="Dewar K."/>
            <person name="Lloyd C."/>
            <person name="Itoh T."/>
            <person name="Takeda T."/>
            <person name="Kim D.-W."/>
            <person name="She X."/>
            <person name="Barlow K.F."/>
            <person name="Bloom T."/>
            <person name="Bruford E."/>
            <person name="Chang J.L."/>
            <person name="Cuomo C.A."/>
            <person name="Eichler E."/>
            <person name="FitzGerald M.G."/>
            <person name="Jaffe D.B."/>
            <person name="LaButti K."/>
            <person name="Nicol R."/>
            <person name="Park H.-S."/>
            <person name="Seaman C."/>
            <person name="Sougnez C."/>
            <person name="Yang X."/>
            <person name="Zimmer A.R."/>
            <person name="Zody M.C."/>
            <person name="Birren B.W."/>
            <person name="Nusbaum C."/>
            <person name="Fujiyama A."/>
            <person name="Hattori M."/>
            <person name="Rogers J."/>
            <person name="Lander E.S."/>
            <person name="Sakaki Y."/>
        </authorList>
    </citation>
    <scope>NUCLEOTIDE SEQUENCE [LARGE SCALE GENOMIC DNA]</scope>
    <scope>VARIANT ILE-9</scope>
</reference>
<reference key="2">
    <citation type="journal article" date="2004" name="Genome Res.">
        <title>The status, quality, and expansion of the NIH full-length cDNA project: the Mammalian Gene Collection (MGC).</title>
        <authorList>
            <consortium name="The MGC Project Team"/>
        </authorList>
    </citation>
    <scope>NUCLEOTIDE SEQUENCE [LARGE SCALE MRNA] (ISOFORMS 1; 2 AND 3)</scope>
    <source>
        <tissue>Mammary gland</tissue>
        <tissue>Placenta</tissue>
        <tissue>Testis</tissue>
        <tissue>Uterus</tissue>
    </source>
</reference>
<reference key="3">
    <citation type="journal article" date="2001" name="Genomics">
        <title>The sequence and gene characterization of a 400-kb candidate region for IDDM4 on chromosome 11q13.</title>
        <authorList>
            <person name="Twells R.C.J."/>
            <person name="Metzker M.L."/>
            <person name="Brown S.D."/>
            <person name="Cox R."/>
            <person name="Garey C."/>
            <person name="Hammond H."/>
            <person name="Hey P.J."/>
            <person name="Levy E."/>
            <person name="Nakagawa Y."/>
            <person name="Philips M.S."/>
            <person name="Todd J.A."/>
            <person name="Hess J.F."/>
        </authorList>
    </citation>
    <scope>NUCLEOTIDE SEQUENCE [MRNA] OF 1-275 (ISOFORM 1)</scope>
</reference>
<reference key="4">
    <citation type="journal article" date="2000" name="Genome Res.">
        <title>Identification of novel human genes evolutionarily conserved in Caenorhabditis elegans by comparative proteomics.</title>
        <authorList>
            <person name="Lai C.-H."/>
            <person name="Chou C.-Y."/>
            <person name="Ch'ang L.-Y."/>
            <person name="Liu C.-S."/>
            <person name="Lin W.-C."/>
        </authorList>
    </citation>
    <scope>NUCLEOTIDE SEQUENCE [LARGE SCALE MRNA] OF 2-885 (ISOFORM 2)</scope>
</reference>
<reference key="5">
    <citation type="journal article" date="2004" name="Nat. Genet.">
        <title>Complete sequencing and characterization of 21,243 full-length human cDNAs.</title>
        <authorList>
            <person name="Ota T."/>
            <person name="Suzuki Y."/>
            <person name="Nishikawa T."/>
            <person name="Otsuki T."/>
            <person name="Sugiyama T."/>
            <person name="Irie R."/>
            <person name="Wakamatsu A."/>
            <person name="Hayashi K."/>
            <person name="Sato H."/>
            <person name="Nagai K."/>
            <person name="Kimura K."/>
            <person name="Makita H."/>
            <person name="Sekine M."/>
            <person name="Obayashi M."/>
            <person name="Nishi T."/>
            <person name="Shibahara T."/>
            <person name="Tanaka T."/>
            <person name="Ishii S."/>
            <person name="Yamamoto J."/>
            <person name="Saito K."/>
            <person name="Kawai Y."/>
            <person name="Isono Y."/>
            <person name="Nakamura Y."/>
            <person name="Nagahari K."/>
            <person name="Murakami K."/>
            <person name="Yasuda T."/>
            <person name="Iwayanagi T."/>
            <person name="Wagatsuma M."/>
            <person name="Shiratori A."/>
            <person name="Sudo H."/>
            <person name="Hosoiri T."/>
            <person name="Kaku Y."/>
            <person name="Kodaira H."/>
            <person name="Kondo H."/>
            <person name="Sugawara M."/>
            <person name="Takahashi M."/>
            <person name="Kanda K."/>
            <person name="Yokoi T."/>
            <person name="Furuya T."/>
            <person name="Kikkawa E."/>
            <person name="Omura Y."/>
            <person name="Abe K."/>
            <person name="Kamihara K."/>
            <person name="Katsuta N."/>
            <person name="Sato K."/>
            <person name="Tanikawa M."/>
            <person name="Yamazaki M."/>
            <person name="Ninomiya K."/>
            <person name="Ishibashi T."/>
            <person name="Yamashita H."/>
            <person name="Murakawa K."/>
            <person name="Fujimori K."/>
            <person name="Tanai H."/>
            <person name="Kimata M."/>
            <person name="Watanabe M."/>
            <person name="Hiraoka S."/>
            <person name="Chiba Y."/>
            <person name="Ishida S."/>
            <person name="Ono Y."/>
            <person name="Takiguchi S."/>
            <person name="Watanabe S."/>
            <person name="Yosida M."/>
            <person name="Hotuta T."/>
            <person name="Kusano J."/>
            <person name="Kanehori K."/>
            <person name="Takahashi-Fujii A."/>
            <person name="Hara H."/>
            <person name="Tanase T.-O."/>
            <person name="Nomura Y."/>
            <person name="Togiya S."/>
            <person name="Komai F."/>
            <person name="Hara R."/>
            <person name="Takeuchi K."/>
            <person name="Arita M."/>
            <person name="Imose N."/>
            <person name="Musashino K."/>
            <person name="Yuuki H."/>
            <person name="Oshima A."/>
            <person name="Sasaki N."/>
            <person name="Aotsuka S."/>
            <person name="Yoshikawa Y."/>
            <person name="Matsunawa H."/>
            <person name="Ichihara T."/>
            <person name="Shiohata N."/>
            <person name="Sano S."/>
            <person name="Moriya S."/>
            <person name="Momiyama H."/>
            <person name="Satoh N."/>
            <person name="Takami S."/>
            <person name="Terashima Y."/>
            <person name="Suzuki O."/>
            <person name="Nakagawa S."/>
            <person name="Senoh A."/>
            <person name="Mizoguchi H."/>
            <person name="Goto Y."/>
            <person name="Shimizu F."/>
            <person name="Wakebe H."/>
            <person name="Hishigaki H."/>
            <person name="Watanabe T."/>
            <person name="Sugiyama A."/>
            <person name="Takemoto M."/>
            <person name="Kawakami B."/>
            <person name="Yamazaki M."/>
            <person name="Watanabe K."/>
            <person name="Kumagai A."/>
            <person name="Itakura S."/>
            <person name="Fukuzumi Y."/>
            <person name="Fujimori Y."/>
            <person name="Komiyama M."/>
            <person name="Tashiro H."/>
            <person name="Tanigami A."/>
            <person name="Fujiwara T."/>
            <person name="Ono T."/>
            <person name="Yamada K."/>
            <person name="Fujii Y."/>
            <person name="Ozaki K."/>
            <person name="Hirao M."/>
            <person name="Ohmori Y."/>
            <person name="Kawabata A."/>
            <person name="Hikiji T."/>
            <person name="Kobatake N."/>
            <person name="Inagaki H."/>
            <person name="Ikema Y."/>
            <person name="Okamoto S."/>
            <person name="Okitani R."/>
            <person name="Kawakami T."/>
            <person name="Noguchi S."/>
            <person name="Itoh T."/>
            <person name="Shigeta K."/>
            <person name="Senba T."/>
            <person name="Matsumura K."/>
            <person name="Nakajima Y."/>
            <person name="Mizuno T."/>
            <person name="Morinaga M."/>
            <person name="Sasaki M."/>
            <person name="Togashi T."/>
            <person name="Oyama M."/>
            <person name="Hata H."/>
            <person name="Watanabe M."/>
            <person name="Komatsu T."/>
            <person name="Mizushima-Sugano J."/>
            <person name="Satoh T."/>
            <person name="Shirai Y."/>
            <person name="Takahashi Y."/>
            <person name="Nakagawa K."/>
            <person name="Okumura K."/>
            <person name="Nagase T."/>
            <person name="Nomura N."/>
            <person name="Kikuchi H."/>
            <person name="Masuho Y."/>
            <person name="Yamashita R."/>
            <person name="Nakai K."/>
            <person name="Yada T."/>
            <person name="Nakamura Y."/>
            <person name="Ohara O."/>
            <person name="Isogai T."/>
            <person name="Sugano S."/>
        </authorList>
    </citation>
    <scope>NUCLEOTIDE SEQUENCE [LARGE SCALE MRNA] OF 442-884</scope>
    <source>
        <tissue>Colon</tissue>
    </source>
</reference>
<reference key="6">
    <citation type="journal article" date="2007" name="BMC Genomics">
        <title>The full-ORF clone resource of the German cDNA consortium.</title>
        <authorList>
            <person name="Bechtel S."/>
            <person name="Rosenfelder H."/>
            <person name="Duda A."/>
            <person name="Schmidt C.P."/>
            <person name="Ernst U."/>
            <person name="Wellenreuther R."/>
            <person name="Mehrle A."/>
            <person name="Schuster C."/>
            <person name="Bahr A."/>
            <person name="Bloecker H."/>
            <person name="Heubner D."/>
            <person name="Hoerlein A."/>
            <person name="Michel G."/>
            <person name="Wedler H."/>
            <person name="Koehrer K."/>
            <person name="Ottenwaelder B."/>
            <person name="Poustka A."/>
            <person name="Wiemann S."/>
            <person name="Schupp I."/>
        </authorList>
    </citation>
    <scope>NUCLEOTIDE SEQUENCE [LARGE SCALE MRNA] OF 592-885</scope>
    <source>
        <tissue>Testis</tissue>
    </source>
</reference>
<reference key="7">
    <citation type="journal article" date="2006" name="Cancer Biol. Ther.">
        <title>Loss of DNA methylation and histone H4 lysine 20 trimethylation in human breast cancer cells is associated with aberrant expression of DNA methyltransferase 1, Suv4-20h2 histone methyltransferase and methyl-binding proteins.</title>
        <authorList>
            <person name="Tryndyak V.P."/>
            <person name="Kovalchuk O."/>
            <person name="Pogribny I.P."/>
        </authorList>
    </citation>
    <scope>INDUCTION</scope>
</reference>
<reference key="8">
    <citation type="journal article" date="2013" name="J. Mol. Cell Biol.">
        <title>FSHD muscular dystrophy region gene 1 binds Suv4-20h1 histone methyltransferase and impairs myogenesis.</title>
        <authorList>
            <person name="Neguembor M.V."/>
            <person name="Xynos A."/>
            <person name="Onorati M.C."/>
            <person name="Caccia R."/>
            <person name="Bortolanza S."/>
            <person name="Godio C."/>
            <person name="Pistoni M."/>
            <person name="Corona D.F."/>
            <person name="Schotta G."/>
            <person name="Gabellini D."/>
        </authorList>
    </citation>
    <scope>FUNCTION</scope>
    <scope>INTERACTION WITH FRG1</scope>
    <scope>SUBCELLULAR LOCATION</scope>
</reference>
<reference key="9">
    <citation type="journal article" date="2014" name="Nat. Struct. Mol. Biol.">
        <title>Uncovering global SUMOylation signaling networks in a site-specific manner.</title>
        <authorList>
            <person name="Hendriks I.A."/>
            <person name="D'Souza R.C."/>
            <person name="Yang B."/>
            <person name="Verlaan-de Vries M."/>
            <person name="Mann M."/>
            <person name="Vertegaal A.C."/>
        </authorList>
    </citation>
    <scope>SUMOYLATION [LARGE SCALE ANALYSIS] AT LYS-555</scope>
    <scope>IDENTIFICATION BY MASS SPECTROMETRY [LARGE SCALE ANALYSIS]</scope>
</reference>
<reference key="10">
    <citation type="journal article" date="2015" name="Cell Rep.">
        <title>SUMO-2 orchestrates chromatin modifiers in response to DNA damage.</title>
        <authorList>
            <person name="Hendriks I.A."/>
            <person name="Treffers L.W."/>
            <person name="Verlaan-de Vries M."/>
            <person name="Olsen J.V."/>
            <person name="Vertegaal A.C."/>
        </authorList>
    </citation>
    <scope>SUMOYLATION [LARGE SCALE ANALYSIS] AT LYS-555</scope>
    <scope>IDENTIFICATION BY MASS SPECTROMETRY [LARGE SCALE ANALYSIS]</scope>
</reference>
<reference key="11">
    <citation type="journal article" date="2017" name="Nat. Struct. Mol. Biol.">
        <title>Site-specific mapping of the human SUMO proteome reveals co-modification with phosphorylation.</title>
        <authorList>
            <person name="Hendriks I.A."/>
            <person name="Lyon D."/>
            <person name="Young C."/>
            <person name="Jensen L.J."/>
            <person name="Vertegaal A.C."/>
            <person name="Nielsen M.L."/>
        </authorList>
    </citation>
    <scope>SUMOYLATION [LARGE SCALE ANALYSIS] AT LYS-555</scope>
    <scope>IDENTIFICATION BY MASS SPECTROMETRY [LARGE SCALE ANALYSIS]</scope>
</reference>
<reference evidence="18" key="12">
    <citation type="journal article" date="2013" name="FEBS Lett.">
        <title>Crystal structures of the human histone H4K20 methyltransferases SUV420H1 and SUV420H2.</title>
        <authorList>
            <person name="Wu H."/>
            <person name="Siarheyeva A."/>
            <person name="Zeng H."/>
            <person name="Lam R."/>
            <person name="Dong A."/>
            <person name="Wu X.H."/>
            <person name="Li Y."/>
            <person name="Schapira M."/>
            <person name="Vedadi M."/>
            <person name="Min J."/>
        </authorList>
    </citation>
    <scope>X-RAY CRYSTALLOGRAPHY (1.85 ANGSTROMS) OF 63-335 IN COMPLEX WITH S-ADENOSYL-L-METHIONINE AND ZINC</scope>
    <scope>CATALYTIC ACTIVITY</scope>
    <scope>FUNCTION</scope>
    <scope>BIOPHYSICOCHEMICAL PROPERTIES</scope>
    <scope>MUTAGENESIS OF GLY-229; SER-251; TRP-264; PHE-281 AND PHE-311</scope>
    <scope>SUBUNIT</scope>
</reference>
<reference evidence="19" key="13">
    <citation type="journal article" date="2017" name="Nat. Chem. Biol.">
        <title>The SUV4-20 inhibitor A-196 verifies a role for epigenetics in genomic integrity.</title>
        <authorList>
            <person name="Bromberg K.D."/>
            <person name="Mitchell T.R."/>
            <person name="Upadhyay A.K."/>
            <person name="Jakob C.G."/>
            <person name="Jhala M.A."/>
            <person name="Comess K.M."/>
            <person name="Lasko L.M."/>
            <person name="Li C."/>
            <person name="Tuzon C.T."/>
            <person name="Dai Y."/>
            <person name="Li F."/>
            <person name="Eram M.S."/>
            <person name="Nuber A."/>
            <person name="Soni N.B."/>
            <person name="Manaves V."/>
            <person name="Algire M.A."/>
            <person name="Sweis R.F."/>
            <person name="Torrent M."/>
            <person name="Schotta G."/>
            <person name="Sun C."/>
            <person name="Michaelides M.R."/>
            <person name="Shoemaker A.R."/>
            <person name="Arrowsmith C.H."/>
            <person name="Brown P.J."/>
            <person name="Santhakumar V."/>
            <person name="Martin A."/>
            <person name="Rice J.C."/>
            <person name="Chiang G.G."/>
            <person name="Vedadi M."/>
            <person name="Barsyte-Lovejoy D."/>
            <person name="Pappano W.N."/>
        </authorList>
    </citation>
    <scope>X-RAY CRYSTALLOGRAPHY (2.22 ANGSTROMS) OF 69-335 IN COMPLEX WITH S-ADENOSYL-L-METHIONINE INHIBITOR AND ZINC</scope>
    <scope>CATALYTIC ACTIVITY</scope>
    <scope>ACTIVITY REGULATION</scope>
    <scope>FUNCTION</scope>
</reference>
<reference evidence="20" key="14">
    <citation type="submission" date="2017-06" db="PDB data bank">
        <title>Crystal Structure of the SET Domain of Human SUV420H1 In Complex With Inhibitor.</title>
        <authorList>
            <person name="Halabelian L."/>
            <person name="Tempel W."/>
            <person name="Brown P.J."/>
            <person name="Bountra C."/>
            <person name="Edwards A.M."/>
            <person name="Arrowsmith C.H."/>
        </authorList>
    </citation>
    <scope>X-RAY CRYSTALLOGRAPHY (2.30 ANGSTROMS) OF 63-335 IN COMPLEX WITH S-ADENOSYL-L-METHIONINE INHIBITOR AND ZINC</scope>
    <scope>SUBUNIT</scope>
</reference>
<reference key="15">
    <citation type="journal article" date="2017" name="Nat. Genet.">
        <title>Targeted sequencing identifies 91 neurodevelopmental-disorder risk genes with autism and developmental-disability biases.</title>
        <authorList>
            <person name="Stessman H.A."/>
            <person name="Xiong B."/>
            <person name="Coe B.P."/>
            <person name="Wang T."/>
            <person name="Hoekzema K."/>
            <person name="Fenckova M."/>
            <person name="Kvarnung M."/>
            <person name="Gerdts J."/>
            <person name="Trinh S."/>
            <person name="Cosemans N."/>
            <person name="Vives L."/>
            <person name="Lin J."/>
            <person name="Turner T.N."/>
            <person name="Santen G."/>
            <person name="Ruivenkamp C."/>
            <person name="Kriek M."/>
            <person name="van Haeringen A."/>
            <person name="Aten E."/>
            <person name="Friend K."/>
            <person name="Liebelt J."/>
            <person name="Barnett C."/>
            <person name="Haan E."/>
            <person name="Shaw M."/>
            <person name="Gecz J."/>
            <person name="Anderlid B.M."/>
            <person name="Nordgren A."/>
            <person name="Lindstrand A."/>
            <person name="Schwartz C."/>
            <person name="Kooy R.F."/>
            <person name="Vandeweyer G."/>
            <person name="Helsmoortel C."/>
            <person name="Romano C."/>
            <person name="Alberti A."/>
            <person name="Vinci M."/>
            <person name="Avola E."/>
            <person name="Giusto S."/>
            <person name="Courchesne E."/>
            <person name="Pramparo T."/>
            <person name="Pierce K."/>
            <person name="Nalabolu S."/>
            <person name="Amaral D.G."/>
            <person name="Scheffer I.E."/>
            <person name="Delatycki M.B."/>
            <person name="Lockhart P.J."/>
            <person name="Hormozdiari F."/>
            <person name="Harich B."/>
            <person name="Castells-Nobau A."/>
            <person name="Xia K."/>
            <person name="Peeters H."/>
            <person name="Nordenskjoeld M."/>
            <person name="Schenck A."/>
            <person name="Bernier R.A."/>
            <person name="Eichler E.E."/>
        </authorList>
    </citation>
    <scope>INVOLVEMENT IN MRD51</scope>
    <scope>VARIANTS MRD51 SER-264; VAL-513 AND GLN-540</scope>
</reference>
<reference key="16">
    <citation type="journal article" date="2018" name="Am. J. Hum. Genet.">
        <title>Histone lysine methylases and demethylases in the landscape of human developmental disorders.</title>
        <authorList>
            <consortium name="Clinical Assessment of the Utility of Sequencing and Evaluation as a Service (CAUSES) Study"/>
            <consortium name="Deciphering Developmental Disorders (DDD) Study"/>
            <person name="Faundes V."/>
            <person name="Newman W.G."/>
            <person name="Bernardini L."/>
            <person name="Canham N."/>
            <person name="Clayton-Smith J."/>
            <person name="Dallapiccola B."/>
            <person name="Davies S.J."/>
            <person name="Demos M.K."/>
            <person name="Goldman A."/>
            <person name="Gill H."/>
            <person name="Horton R."/>
            <person name="Kerr B."/>
            <person name="Kumar D."/>
            <person name="Lehman A."/>
            <person name="McKee S."/>
            <person name="Morton J."/>
            <person name="Parker M.J."/>
            <person name="Rankin J."/>
            <person name="Robertson L."/>
            <person name="Temple I.K."/>
            <person name="Banka S."/>
        </authorList>
    </citation>
    <scope>VARIANT MRD51 187-ARG--ALA-885 DEL</scope>
</reference>
<feature type="chain" id="PRO_0000281787" description="Histone-lysine N-methyltransferase KMT5B">
    <location>
        <begin position="1"/>
        <end position="885"/>
    </location>
</feature>
<feature type="domain" description="SET" evidence="3">
    <location>
        <begin position="193"/>
        <end position="308"/>
    </location>
</feature>
<feature type="region of interest" description="Disordered" evidence="5">
    <location>
        <begin position="1"/>
        <end position="62"/>
    </location>
</feature>
<feature type="region of interest" description="Disordered" evidence="5">
    <location>
        <begin position="363"/>
        <end position="444"/>
    </location>
</feature>
<feature type="region of interest" description="Disordered" evidence="5">
    <location>
        <begin position="590"/>
        <end position="655"/>
    </location>
</feature>
<feature type="region of interest" description="Disordered" evidence="5">
    <location>
        <begin position="716"/>
        <end position="740"/>
    </location>
</feature>
<feature type="region of interest" description="Disordered" evidence="5">
    <location>
        <begin position="816"/>
        <end position="850"/>
    </location>
</feature>
<feature type="compositionally biased region" description="Polar residues" evidence="5">
    <location>
        <begin position="24"/>
        <end position="33"/>
    </location>
</feature>
<feature type="compositionally biased region" description="Basic and acidic residues" evidence="5">
    <location>
        <begin position="35"/>
        <end position="51"/>
    </location>
</feature>
<feature type="compositionally biased region" description="Polar residues" evidence="5">
    <location>
        <begin position="53"/>
        <end position="62"/>
    </location>
</feature>
<feature type="compositionally biased region" description="Low complexity" evidence="5">
    <location>
        <begin position="367"/>
        <end position="378"/>
    </location>
</feature>
<feature type="compositionally biased region" description="Polar residues" evidence="5">
    <location>
        <begin position="379"/>
        <end position="392"/>
    </location>
</feature>
<feature type="compositionally biased region" description="Low complexity" evidence="5">
    <location>
        <begin position="393"/>
        <end position="402"/>
    </location>
</feature>
<feature type="compositionally biased region" description="Polar residues" evidence="5">
    <location>
        <begin position="410"/>
        <end position="436"/>
    </location>
</feature>
<feature type="compositionally biased region" description="Basic and acidic residues" evidence="5">
    <location>
        <begin position="590"/>
        <end position="606"/>
    </location>
</feature>
<feature type="compositionally biased region" description="Basic and acidic residues" evidence="5">
    <location>
        <begin position="624"/>
        <end position="641"/>
    </location>
</feature>
<feature type="compositionally biased region" description="Acidic residues" evidence="5">
    <location>
        <begin position="816"/>
        <end position="827"/>
    </location>
</feature>
<feature type="compositionally biased region" description="Acidic residues" evidence="5">
    <location>
        <begin position="833"/>
        <end position="849"/>
    </location>
</feature>
<feature type="binding site" evidence="9 10 13 18 19 20">
    <location>
        <position position="98"/>
    </location>
    <ligand>
        <name>S-adenosyl-L-methionine</name>
        <dbReference type="ChEBI" id="CHEBI:59789"/>
    </ligand>
</feature>
<feature type="binding site" evidence="9 10 13 18 19 20">
    <location>
        <begin position="203"/>
        <end position="206"/>
    </location>
    <ligand>
        <name>S-adenosyl-L-methionine</name>
        <dbReference type="ChEBI" id="CHEBI:59789"/>
    </ligand>
</feature>
<feature type="binding site" evidence="9 10 13 18 19 20">
    <location>
        <position position="210"/>
    </location>
    <ligand>
        <name>S-adenosyl-L-methionine</name>
        <dbReference type="ChEBI" id="CHEBI:59789"/>
    </ligand>
</feature>
<feature type="binding site" evidence="9 10 18 19">
    <location>
        <position position="257"/>
    </location>
    <ligand>
        <name>S-adenosyl-L-methionine</name>
        <dbReference type="ChEBI" id="CHEBI:59789"/>
    </ligand>
</feature>
<feature type="binding site" evidence="9 10 13 18 19 20">
    <location>
        <begin position="272"/>
        <end position="273"/>
    </location>
    <ligand>
        <name>S-adenosyl-L-methionine</name>
        <dbReference type="ChEBI" id="CHEBI:59789"/>
    </ligand>
</feature>
<feature type="binding site" evidence="9 10 13 18 19 20">
    <location>
        <position position="275"/>
    </location>
    <ligand>
        <name>Zn(2+)</name>
        <dbReference type="ChEBI" id="CHEBI:29105"/>
    </ligand>
</feature>
<feature type="binding site" evidence="9 10 13 18 19 20">
    <location>
        <position position="319"/>
    </location>
    <ligand>
        <name>Zn(2+)</name>
        <dbReference type="ChEBI" id="CHEBI:29105"/>
    </ligand>
</feature>
<feature type="binding site" evidence="9 10 13 18 19 20">
    <location>
        <position position="320"/>
    </location>
    <ligand>
        <name>S-adenosyl-L-methionine</name>
        <dbReference type="ChEBI" id="CHEBI:59789"/>
    </ligand>
</feature>
<feature type="binding site" evidence="9 10 13 18 19 20">
    <location>
        <position position="321"/>
    </location>
    <ligand>
        <name>Zn(2+)</name>
        <dbReference type="ChEBI" id="CHEBI:29105"/>
    </ligand>
</feature>
<feature type="binding site" evidence="9 10 13 18 19 20">
    <location>
        <position position="324"/>
    </location>
    <ligand>
        <name>Zn(2+)</name>
        <dbReference type="ChEBI" id="CHEBI:29105"/>
    </ligand>
</feature>
<feature type="cross-link" description="Glycyl lysine isopeptide (Lys-Gly) (interchain with G-Cter in SUMO2)" evidence="21 22 23">
    <location>
        <position position="555"/>
    </location>
</feature>
<feature type="splice variant" id="VSP_040034" description="In isoform 3." evidence="15">
    <original>D</original>
    <variation>DLINS</variation>
    <location>
        <position position="274"/>
    </location>
</feature>
<feature type="splice variant" id="VSP_040035" description="In isoform 3." evidence="15">
    <location>
        <begin position="275"/>
        <end position="885"/>
    </location>
</feature>
<feature type="splice variant" id="VSP_024051" description="In isoform 2." evidence="14 15">
    <original>TS</original>
    <variation>SK</variation>
    <location>
        <begin position="392"/>
        <end position="393"/>
    </location>
</feature>
<feature type="splice variant" id="VSP_024052" description="In isoform 2." evidence="14 15">
    <location>
        <begin position="394"/>
        <end position="885"/>
    </location>
</feature>
<feature type="sequence variant" id="VAR_047765" description="In dbSNP:rs2512606." evidence="6">
    <original>N</original>
    <variation>I</variation>
    <location>
        <position position="9"/>
    </location>
</feature>
<feature type="sequence variant" id="VAR_081278" description="In MRD51." evidence="12">
    <location>
        <begin position="187"/>
        <end position="885"/>
    </location>
</feature>
<feature type="sequence variant" id="VAR_080549" description="In MRD51; uncertain significance; dbSNP:rs1555028104." evidence="11">
    <original>W</original>
    <variation>S</variation>
    <location>
        <position position="264"/>
    </location>
</feature>
<feature type="sequence variant" id="VAR_080550" description="In MRD51; uncertain significance; dbSNP:rs377163167." evidence="11">
    <original>A</original>
    <variation>V</variation>
    <location>
        <position position="513"/>
    </location>
</feature>
<feature type="sequence variant" id="VAR_080551" description="In MRD51; uncertain significance; dbSNP:rs565603169." evidence="11">
    <original>R</original>
    <variation>Q</variation>
    <location>
        <position position="540"/>
    </location>
</feature>
<feature type="mutagenesis site" description="Km for H4K20me1rise to 17 uM. 8-fold decrease in catalytic efficiency." evidence="9">
    <original>G</original>
    <variation>F</variation>
    <location>
        <position position="229"/>
    </location>
</feature>
<feature type="mutagenesis site" description="Abolishes histone methyltransferase activity (H4-K20 specific)." evidence="9">
    <original>G</original>
    <variation>Y</variation>
    <location>
        <position position="229"/>
    </location>
</feature>
<feature type="mutagenesis site" description="Abolishes histone methyltransferase activity (H4-K20 specific)." evidence="9">
    <original>S</original>
    <variation>A</variation>
    <location>
        <position position="251"/>
    </location>
</feature>
<feature type="mutagenesis site" description="Abolishes histone methyltransferase activity (H4-K20 specific)." evidence="9">
    <original>W</original>
    <variation>A</variation>
    <location>
        <position position="264"/>
    </location>
</feature>
<feature type="mutagenesis site" description="Abolishes histone methyltransferase activity (H4-K20 specific)." evidence="9">
    <original>F</original>
    <variation>A</variation>
    <location>
        <position position="281"/>
    </location>
</feature>
<feature type="mutagenesis site" description="Km for H4K20me1rise to 8.5 uM. 3-fold decrease in catalytic efficiency." evidence="9">
    <original>F</original>
    <variation>A</variation>
    <location>
        <position position="311"/>
    </location>
</feature>
<feature type="sequence conflict" description="In Ref. 4; AAD34080." evidence="16" ref="4">
    <original>A</original>
    <variation>P</variation>
    <location>
        <position position="74"/>
    </location>
</feature>
<feature type="sequence conflict" description="In Ref. 4; AAD34080." evidence="16" ref="4">
    <original>E</original>
    <variation>G</variation>
    <location>
        <position position="79"/>
    </location>
</feature>
<feature type="sequence conflict" description="In Ref. 4; AAD34080." evidence="16" ref="4">
    <original>K</original>
    <variation>Q</variation>
    <location>
        <position position="99"/>
    </location>
</feature>
<feature type="sequence conflict" description="In Ref. 3; AAG36937." evidence="16" ref="3">
    <original>R</original>
    <variation>W</variation>
    <location>
        <position position="108"/>
    </location>
</feature>
<feature type="sequence conflict" description="In Ref. 4; AAD34080." evidence="16" ref="4">
    <original>N</original>
    <variation>K</variation>
    <location>
        <position position="123"/>
    </location>
</feature>
<feature type="sequence conflict" description="In Ref. 4; AAD34080." evidence="16" ref="4">
    <original>E</original>
    <variation>G</variation>
    <location>
        <position position="135"/>
    </location>
</feature>
<feature type="sequence conflict" description="In Ref. 5; BAA90905." evidence="16" ref="5">
    <original>K</original>
    <variation>E</variation>
    <location>
        <position position="469"/>
    </location>
</feature>
<feature type="sequence conflict" description="In Ref. 5; BAA90905." evidence="16" ref="5">
    <original>V</original>
    <variation>A</variation>
    <location>
        <position position="483"/>
    </location>
</feature>
<feature type="helix" evidence="24">
    <location>
        <begin position="74"/>
        <end position="93"/>
    </location>
</feature>
<feature type="helix" evidence="24">
    <location>
        <begin position="134"/>
        <end position="147"/>
    </location>
</feature>
<feature type="helix" evidence="24">
    <location>
        <begin position="150"/>
        <end position="157"/>
    </location>
</feature>
<feature type="helix" evidence="24">
    <location>
        <begin position="161"/>
        <end position="167"/>
    </location>
</feature>
<feature type="helix" evidence="24">
    <location>
        <begin position="172"/>
        <end position="187"/>
    </location>
</feature>
<feature type="helix" evidence="24">
    <location>
        <begin position="191"/>
        <end position="193"/>
    </location>
</feature>
<feature type="strand" evidence="24">
    <location>
        <begin position="195"/>
        <end position="200"/>
    </location>
</feature>
<feature type="strand" evidence="25">
    <location>
        <begin position="202"/>
        <end position="205"/>
    </location>
</feature>
<feature type="strand" evidence="24">
    <location>
        <begin position="207"/>
        <end position="216"/>
    </location>
</feature>
<feature type="strand" evidence="24">
    <location>
        <begin position="223"/>
        <end position="234"/>
    </location>
</feature>
<feature type="helix" evidence="24">
    <location>
        <begin position="236"/>
        <end position="242"/>
    </location>
</feature>
<feature type="turn" evidence="24">
    <location>
        <begin position="245"/>
        <end position="247"/>
    </location>
</feature>
<feature type="strand" evidence="24">
    <location>
        <begin position="252"/>
        <end position="255"/>
    </location>
</feature>
<feature type="turn" evidence="24">
    <location>
        <begin position="256"/>
        <end position="259"/>
    </location>
</feature>
<feature type="strand" evidence="24">
    <location>
        <begin position="260"/>
        <end position="266"/>
    </location>
</feature>
<feature type="helix" evidence="24">
    <location>
        <begin position="267"/>
        <end position="270"/>
    </location>
</feature>
<feature type="strand" evidence="24">
    <location>
        <begin position="278"/>
        <end position="285"/>
    </location>
</feature>
<feature type="strand" evidence="24">
    <location>
        <begin position="288"/>
        <end position="295"/>
    </location>
</feature>
<feature type="turn" evidence="24">
    <location>
        <begin position="309"/>
        <end position="312"/>
    </location>
</feature>
<feature type="helix" evidence="24">
    <location>
        <begin position="314"/>
        <end position="316"/>
    </location>
</feature>
<feature type="helix" evidence="24">
    <location>
        <begin position="322"/>
        <end position="327"/>
    </location>
</feature>
<feature type="helix" evidence="24">
    <location>
        <begin position="330"/>
        <end position="332"/>
    </location>
</feature>
<feature type="helix" evidence="25">
    <location>
        <begin position="355"/>
        <end position="360"/>
    </location>
</feature>
<dbReference type="EC" id="2.1.1.362" evidence="9 10"/>
<dbReference type="EC" id="2.1.1.361" evidence="9"/>
<dbReference type="EMBL" id="AP002992">
    <property type="status" value="NOT_ANNOTATED_CDS"/>
    <property type="molecule type" value="Genomic_DNA"/>
</dbReference>
<dbReference type="EMBL" id="KC877427">
    <property type="status" value="NOT_ANNOTATED_CDS"/>
    <property type="molecule type" value="Genomic_DNA"/>
</dbReference>
<dbReference type="EMBL" id="KC877429">
    <property type="status" value="NOT_ANNOTATED_CDS"/>
    <property type="molecule type" value="Genomic_DNA"/>
</dbReference>
<dbReference type="EMBL" id="BC002522">
    <property type="protein sequence ID" value="AAH02522.2"/>
    <property type="molecule type" value="mRNA"/>
</dbReference>
<dbReference type="EMBL" id="BC012933">
    <property type="protein sequence ID" value="AAH12933.2"/>
    <property type="molecule type" value="mRNA"/>
</dbReference>
<dbReference type="EMBL" id="BC065287">
    <property type="protein sequence ID" value="AAH65287.1"/>
    <property type="molecule type" value="mRNA"/>
</dbReference>
<dbReference type="EMBL" id="BC087834">
    <property type="protein sequence ID" value="AAH87834.1"/>
    <property type="molecule type" value="mRNA"/>
</dbReference>
<dbReference type="EMBL" id="BC098121">
    <property type="protein sequence ID" value="AAH98121.1"/>
    <property type="status" value="ALT_SEQ"/>
    <property type="molecule type" value="mRNA"/>
</dbReference>
<dbReference type="EMBL" id="BC099714">
    <property type="protein sequence ID" value="AAH99714.1"/>
    <property type="molecule type" value="mRNA"/>
</dbReference>
<dbReference type="EMBL" id="BC103498">
    <property type="protein sequence ID" value="AAI03499.1"/>
    <property type="molecule type" value="mRNA"/>
</dbReference>
<dbReference type="EMBL" id="BC104483">
    <property type="protein sequence ID" value="AAI04484.1"/>
    <property type="status" value="ALT_FRAME"/>
    <property type="molecule type" value="mRNA"/>
</dbReference>
<dbReference type="EMBL" id="AF264782">
    <property type="protein sequence ID" value="AAG36937.1"/>
    <property type="status" value="ALT_FRAME"/>
    <property type="molecule type" value="mRNA"/>
</dbReference>
<dbReference type="EMBL" id="AF151843">
    <property type="protein sequence ID" value="AAD34080.1"/>
    <property type="status" value="ALT_INIT"/>
    <property type="molecule type" value="mRNA"/>
</dbReference>
<dbReference type="EMBL" id="AK000046">
    <property type="protein sequence ID" value="BAA90905.1"/>
    <property type="status" value="ALT_INIT"/>
    <property type="molecule type" value="mRNA"/>
</dbReference>
<dbReference type="EMBL" id="AL512763">
    <property type="protein sequence ID" value="CAC21680.1"/>
    <property type="molecule type" value="mRNA"/>
</dbReference>
<dbReference type="CCDS" id="CCDS31623.1">
    <molecule id="Q4FZB7-1"/>
</dbReference>
<dbReference type="CCDS" id="CCDS44660.1">
    <molecule id="Q4FZB7-2"/>
</dbReference>
<dbReference type="RefSeq" id="NP_001287838.1">
    <property type="nucleotide sequence ID" value="NM_001300909.1"/>
</dbReference>
<dbReference type="RefSeq" id="NP_001356355.1">
    <molecule id="Q4FZB7-1"/>
    <property type="nucleotide sequence ID" value="NM_001369426.1"/>
</dbReference>
<dbReference type="RefSeq" id="NP_001356356.1">
    <molecule id="Q4FZB7-2"/>
    <property type="nucleotide sequence ID" value="NM_001369427.1"/>
</dbReference>
<dbReference type="RefSeq" id="NP_057112.3">
    <molecule id="Q4FZB7-2"/>
    <property type="nucleotide sequence ID" value="NM_016028.4"/>
</dbReference>
<dbReference type="RefSeq" id="NP_060105.3">
    <molecule id="Q4FZB7-1"/>
    <property type="nucleotide sequence ID" value="NM_017635.4"/>
</dbReference>
<dbReference type="RefSeq" id="XP_005274092.2">
    <molecule id="Q4FZB7-1"/>
    <property type="nucleotide sequence ID" value="XM_005274035.5"/>
</dbReference>
<dbReference type="RefSeq" id="XP_011543393.1">
    <property type="nucleotide sequence ID" value="XM_011545091.1"/>
</dbReference>
<dbReference type="RefSeq" id="XP_011543395.1">
    <property type="nucleotide sequence ID" value="XM_011545093.2"/>
</dbReference>
<dbReference type="RefSeq" id="XP_011543396.1">
    <property type="nucleotide sequence ID" value="XM_011545094.2"/>
</dbReference>
<dbReference type="RefSeq" id="XP_047283027.1">
    <molecule id="Q4FZB7-1"/>
    <property type="nucleotide sequence ID" value="XM_047427071.1"/>
</dbReference>
<dbReference type="RefSeq" id="XP_054225022.1">
    <molecule id="Q4FZB7-1"/>
    <property type="nucleotide sequence ID" value="XM_054369047.1"/>
</dbReference>
<dbReference type="RefSeq" id="XP_054225023.1">
    <molecule id="Q4FZB7-1"/>
    <property type="nucleotide sequence ID" value="XM_054369048.1"/>
</dbReference>
<dbReference type="PDB" id="3S8P">
    <property type="method" value="X-ray"/>
    <property type="resolution" value="1.85 A"/>
    <property type="chains" value="A/B=63-335"/>
</dbReference>
<dbReference type="PDB" id="5CPR">
    <property type="method" value="X-ray"/>
    <property type="resolution" value="2.22 A"/>
    <property type="chains" value="B=69-335"/>
</dbReference>
<dbReference type="PDB" id="5WBV">
    <property type="method" value="X-ray"/>
    <property type="resolution" value="2.30 A"/>
    <property type="chains" value="A/B=63-335"/>
</dbReference>
<dbReference type="PDB" id="7YRD">
    <property type="method" value="EM"/>
    <property type="resolution" value="3.20 A"/>
    <property type="chains" value="K=62-363"/>
</dbReference>
<dbReference type="PDB" id="7YRG">
    <property type="method" value="EM"/>
    <property type="resolution" value="4.20 A"/>
    <property type="chains" value="K/L=62-363"/>
</dbReference>
<dbReference type="PDB" id="8JHF">
    <property type="method" value="EM"/>
    <property type="resolution" value="3.68 A"/>
    <property type="chains" value="K=1-361"/>
</dbReference>
<dbReference type="PDB" id="8JHG">
    <property type="method" value="EM"/>
    <property type="resolution" value="3.58 A"/>
    <property type="chains" value="K=1-361"/>
</dbReference>
<dbReference type="PDB" id="8T68">
    <property type="method" value="X-ray"/>
    <property type="resolution" value="1.90 A"/>
    <property type="chains" value="A=62-335"/>
</dbReference>
<dbReference type="PDB" id="8T9F">
    <property type="method" value="EM"/>
    <property type="resolution" value="2.60 A"/>
    <property type="chains" value="K=1-392"/>
</dbReference>
<dbReference type="PDB" id="8T9H">
    <property type="method" value="EM"/>
    <property type="resolution" value="3.37 A"/>
    <property type="chains" value="K=2-392"/>
</dbReference>
<dbReference type="PDBsum" id="3S8P"/>
<dbReference type="PDBsum" id="5CPR"/>
<dbReference type="PDBsum" id="5WBV"/>
<dbReference type="PDBsum" id="7YRD"/>
<dbReference type="PDBsum" id="7YRG"/>
<dbReference type="PDBsum" id="8JHF"/>
<dbReference type="PDBsum" id="8JHG"/>
<dbReference type="PDBsum" id="8T68"/>
<dbReference type="PDBsum" id="8T9F"/>
<dbReference type="PDBsum" id="8T9H"/>
<dbReference type="EMDB" id="EMD-36264"/>
<dbReference type="EMDB" id="EMD-36265"/>
<dbReference type="EMDB" id="EMD-41109"/>
<dbReference type="EMDB" id="EMD-41111"/>
<dbReference type="EMDB" id="EMD-41113"/>
<dbReference type="SMR" id="Q4FZB7"/>
<dbReference type="BioGRID" id="119300">
    <property type="interactions" value="23"/>
</dbReference>
<dbReference type="DIP" id="DIP-48656N"/>
<dbReference type="FunCoup" id="Q4FZB7">
    <property type="interactions" value="3671"/>
</dbReference>
<dbReference type="IntAct" id="Q4FZB7">
    <property type="interactions" value="12"/>
</dbReference>
<dbReference type="MINT" id="Q4FZB7"/>
<dbReference type="STRING" id="9606.ENSP00000305899"/>
<dbReference type="BindingDB" id="Q4FZB7"/>
<dbReference type="ChEMBL" id="CHEMBL2321645"/>
<dbReference type="GuidetoPHARMACOLOGY" id="2717"/>
<dbReference type="GlyConnect" id="2047">
    <property type="glycosylation" value="2 N-Linked glycans (1 site)"/>
</dbReference>
<dbReference type="GlyCosmos" id="Q4FZB7">
    <property type="glycosylation" value="1 site, 4 glycans"/>
</dbReference>
<dbReference type="GlyGen" id="Q4FZB7">
    <property type="glycosylation" value="2 sites, 4 N-linked glycans (1 site), 1 O-linked glycan (1 site)"/>
</dbReference>
<dbReference type="iPTMnet" id="Q4FZB7"/>
<dbReference type="PhosphoSitePlus" id="Q4FZB7"/>
<dbReference type="BioMuta" id="KMT5B"/>
<dbReference type="DMDM" id="332278247"/>
<dbReference type="jPOST" id="Q4FZB7"/>
<dbReference type="MassIVE" id="Q4FZB7"/>
<dbReference type="PaxDb" id="9606-ENSP00000305899"/>
<dbReference type="PeptideAtlas" id="Q4FZB7"/>
<dbReference type="ProteomicsDB" id="62098">
    <molecule id="Q4FZB7-1"/>
</dbReference>
<dbReference type="ProteomicsDB" id="62099">
    <molecule id="Q4FZB7-2"/>
</dbReference>
<dbReference type="ProteomicsDB" id="62100">
    <molecule id="Q4FZB7-4"/>
</dbReference>
<dbReference type="Pumba" id="Q4FZB7"/>
<dbReference type="Antibodypedia" id="30535">
    <property type="antibodies" value="251 antibodies from 22 providers"/>
</dbReference>
<dbReference type="DNASU" id="51111"/>
<dbReference type="Ensembl" id="ENST00000304363.9">
    <molecule id="Q4FZB7-1"/>
    <property type="protein sequence ID" value="ENSP00000305899.4"/>
    <property type="gene ID" value="ENSG00000110066.16"/>
</dbReference>
<dbReference type="Ensembl" id="ENST00000401547.6">
    <molecule id="Q4FZB7-2"/>
    <property type="protein sequence ID" value="ENSP00000385965.2"/>
    <property type="gene ID" value="ENSG00000110066.16"/>
</dbReference>
<dbReference type="Ensembl" id="ENST00000405515.5">
    <molecule id="Q4FZB7-2"/>
    <property type="protein sequence ID" value="ENSP00000385640.1"/>
    <property type="gene ID" value="ENSG00000110066.16"/>
</dbReference>
<dbReference type="Ensembl" id="ENST00000441488.6">
    <molecule id="Q4FZB7-4"/>
    <property type="protein sequence ID" value="ENSP00000411146.2"/>
    <property type="gene ID" value="ENSG00000110066.16"/>
</dbReference>
<dbReference type="Ensembl" id="ENST00000615954.4">
    <molecule id="Q4FZB7-1"/>
    <property type="protein sequence ID" value="ENSP00000484858.1"/>
    <property type="gene ID" value="ENSG00000110066.16"/>
</dbReference>
<dbReference type="GeneID" id="51111"/>
<dbReference type="KEGG" id="hsa:51111"/>
<dbReference type="MANE-Select" id="ENST00000304363.9">
    <property type="protein sequence ID" value="ENSP00000305899.4"/>
    <property type="RefSeq nucleotide sequence ID" value="NM_017635.5"/>
    <property type="RefSeq protein sequence ID" value="NP_060105.3"/>
</dbReference>
<dbReference type="UCSC" id="uc001onm.2">
    <molecule id="Q4FZB7-1"/>
    <property type="organism name" value="human"/>
</dbReference>
<dbReference type="AGR" id="HGNC:24283"/>
<dbReference type="CTD" id="51111"/>
<dbReference type="DisGeNET" id="51111"/>
<dbReference type="GeneCards" id="KMT5B"/>
<dbReference type="HGNC" id="HGNC:24283">
    <property type="gene designation" value="KMT5B"/>
</dbReference>
<dbReference type="HPA" id="ENSG00000110066">
    <property type="expression patterns" value="Low tissue specificity"/>
</dbReference>
<dbReference type="MalaCards" id="KMT5B"/>
<dbReference type="MIM" id="610881">
    <property type="type" value="gene"/>
</dbReference>
<dbReference type="MIM" id="617788">
    <property type="type" value="phenotype"/>
</dbReference>
<dbReference type="neXtProt" id="NX_Q4FZB7"/>
<dbReference type="OpenTargets" id="ENSG00000110066"/>
<dbReference type="Orphanet" id="684226">
    <property type="disease" value="Intellectual disability-hypotonia-facial dysmorphism-macrocephaly syndrome"/>
</dbReference>
<dbReference type="PharmGKB" id="PA134958369"/>
<dbReference type="VEuPathDB" id="HostDB:ENSG00000110066"/>
<dbReference type="eggNOG" id="KOG2589">
    <property type="taxonomic scope" value="Eukaryota"/>
</dbReference>
<dbReference type="GeneTree" id="ENSGT00940000156431"/>
<dbReference type="HOGENOM" id="CLU_328991_0_0_1"/>
<dbReference type="InParanoid" id="Q4FZB7"/>
<dbReference type="OMA" id="NDHAQTK"/>
<dbReference type="OrthoDB" id="6627536at2759"/>
<dbReference type="PAN-GO" id="Q4FZB7">
    <property type="GO annotations" value="3 GO annotations based on evolutionary models"/>
</dbReference>
<dbReference type="PhylomeDB" id="Q4FZB7"/>
<dbReference type="TreeFam" id="TF106433"/>
<dbReference type="BioCyc" id="MetaCyc:HS12712-MONOMER"/>
<dbReference type="PathwayCommons" id="Q4FZB7"/>
<dbReference type="Reactome" id="R-HSA-3214841">
    <property type="pathway name" value="PKMTs methylate histone lysines"/>
</dbReference>
<dbReference type="SignaLink" id="Q4FZB7"/>
<dbReference type="SIGNOR" id="Q4FZB7"/>
<dbReference type="BioGRID-ORCS" id="51111">
    <property type="hits" value="78 hits in 1151 CRISPR screens"/>
</dbReference>
<dbReference type="ChiTaRS" id="KMT5B">
    <property type="organism name" value="human"/>
</dbReference>
<dbReference type="EvolutionaryTrace" id="Q4FZB7"/>
<dbReference type="GeneWiki" id="SUV420H1"/>
<dbReference type="GenomeRNAi" id="51111"/>
<dbReference type="Pharos" id="Q4FZB7">
    <property type="development level" value="Tchem"/>
</dbReference>
<dbReference type="PRO" id="PR:Q4FZB7"/>
<dbReference type="Proteomes" id="UP000005640">
    <property type="component" value="Chromosome 11"/>
</dbReference>
<dbReference type="RNAct" id="Q4FZB7">
    <property type="molecule type" value="protein"/>
</dbReference>
<dbReference type="Bgee" id="ENSG00000110066">
    <property type="expression patterns" value="Expressed in cortical plate and 210 other cell types or tissues"/>
</dbReference>
<dbReference type="ExpressionAtlas" id="Q4FZB7">
    <property type="expression patterns" value="baseline and differential"/>
</dbReference>
<dbReference type="GO" id="GO:0005813">
    <property type="term" value="C:centrosome"/>
    <property type="evidence" value="ECO:0000314"/>
    <property type="project" value="HPA"/>
</dbReference>
<dbReference type="GO" id="GO:0036064">
    <property type="term" value="C:ciliary basal body"/>
    <property type="evidence" value="ECO:0000314"/>
    <property type="project" value="HPA"/>
</dbReference>
<dbReference type="GO" id="GO:0005929">
    <property type="term" value="C:cilium"/>
    <property type="evidence" value="ECO:0000314"/>
    <property type="project" value="HPA"/>
</dbReference>
<dbReference type="GO" id="GO:0000779">
    <property type="term" value="C:condensed chromosome, centromeric region"/>
    <property type="evidence" value="ECO:0007669"/>
    <property type="project" value="Ensembl"/>
</dbReference>
<dbReference type="GO" id="GO:0036464">
    <property type="term" value="C:cytoplasmic ribonucleoprotein granule"/>
    <property type="evidence" value="ECO:0000314"/>
    <property type="project" value="HPA"/>
</dbReference>
<dbReference type="GO" id="GO:0001650">
    <property type="term" value="C:fibrillar center"/>
    <property type="evidence" value="ECO:0000314"/>
    <property type="project" value="HPA"/>
</dbReference>
<dbReference type="GO" id="GO:0045171">
    <property type="term" value="C:intercellular bridge"/>
    <property type="evidence" value="ECO:0000314"/>
    <property type="project" value="HPA"/>
</dbReference>
<dbReference type="GO" id="GO:0015630">
    <property type="term" value="C:microtubule cytoskeleton"/>
    <property type="evidence" value="ECO:0000314"/>
    <property type="project" value="HPA"/>
</dbReference>
<dbReference type="GO" id="GO:0072686">
    <property type="term" value="C:mitotic spindle"/>
    <property type="evidence" value="ECO:0000314"/>
    <property type="project" value="HPA"/>
</dbReference>
<dbReference type="GO" id="GO:0005730">
    <property type="term" value="C:nucleolus"/>
    <property type="evidence" value="ECO:0000314"/>
    <property type="project" value="HPA"/>
</dbReference>
<dbReference type="GO" id="GO:0005654">
    <property type="term" value="C:nucleoplasm"/>
    <property type="evidence" value="ECO:0000314"/>
    <property type="project" value="HPA"/>
</dbReference>
<dbReference type="GO" id="GO:0005634">
    <property type="term" value="C:nucleus"/>
    <property type="evidence" value="ECO:0000318"/>
    <property type="project" value="GO_Central"/>
</dbReference>
<dbReference type="GO" id="GO:0005886">
    <property type="term" value="C:plasma membrane"/>
    <property type="evidence" value="ECO:0000314"/>
    <property type="project" value="HPA"/>
</dbReference>
<dbReference type="GO" id="GO:0003682">
    <property type="term" value="F:chromatin binding"/>
    <property type="evidence" value="ECO:0000314"/>
    <property type="project" value="UniProtKB"/>
</dbReference>
<dbReference type="GO" id="GO:0140939">
    <property type="term" value="F:histone H4 methyltransferase activity"/>
    <property type="evidence" value="ECO:0000304"/>
    <property type="project" value="Reactome"/>
</dbReference>
<dbReference type="GO" id="GO:0042799">
    <property type="term" value="F:histone H4K20 methyltransferase activity"/>
    <property type="evidence" value="ECO:0000314"/>
    <property type="project" value="UniProtKB"/>
</dbReference>
<dbReference type="GO" id="GO:0140944">
    <property type="term" value="F:histone H4K20 monomethyltransferase activity"/>
    <property type="evidence" value="ECO:0007669"/>
    <property type="project" value="UniProtKB-EC"/>
</dbReference>
<dbReference type="GO" id="GO:0140941">
    <property type="term" value="F:histone H4K20me methyltransferase activity"/>
    <property type="evidence" value="ECO:0007669"/>
    <property type="project" value="UniProtKB-EC"/>
</dbReference>
<dbReference type="GO" id="GO:0042054">
    <property type="term" value="F:histone methyltransferase activity"/>
    <property type="evidence" value="ECO:0000314"/>
    <property type="project" value="UniProtKB"/>
</dbReference>
<dbReference type="GO" id="GO:0046872">
    <property type="term" value="F:metal ion binding"/>
    <property type="evidence" value="ECO:0007669"/>
    <property type="project" value="UniProtKB-KW"/>
</dbReference>
<dbReference type="GO" id="GO:1904047">
    <property type="term" value="F:S-adenosyl-L-methionine binding"/>
    <property type="evidence" value="ECO:0000250"/>
    <property type="project" value="UniProtKB"/>
</dbReference>
<dbReference type="GO" id="GO:0006281">
    <property type="term" value="P:DNA repair"/>
    <property type="evidence" value="ECO:0000315"/>
    <property type="project" value="UniProtKB"/>
</dbReference>
<dbReference type="GO" id="GO:0032259">
    <property type="term" value="P:methylation"/>
    <property type="evidence" value="ECO:0007669"/>
    <property type="project" value="UniProtKB-KW"/>
</dbReference>
<dbReference type="GO" id="GO:0007517">
    <property type="term" value="P:muscle organ development"/>
    <property type="evidence" value="ECO:0007669"/>
    <property type="project" value="UniProtKB-KW"/>
</dbReference>
<dbReference type="GO" id="GO:2001034">
    <property type="term" value="P:positive regulation of double-strand break repair via nonhomologous end joining"/>
    <property type="evidence" value="ECO:0000315"/>
    <property type="project" value="UniProtKB"/>
</dbReference>
<dbReference type="GO" id="GO:0045830">
    <property type="term" value="P:positive regulation of isotype switching"/>
    <property type="evidence" value="ECO:0000250"/>
    <property type="project" value="UniProtKB"/>
</dbReference>
<dbReference type="CDD" id="cd19184">
    <property type="entry name" value="SET_KMT5B"/>
    <property type="match status" value="1"/>
</dbReference>
<dbReference type="FunFam" id="1.10.10.1700:FF:000001">
    <property type="entry name" value="Histone-lysine N-methyltransferase"/>
    <property type="match status" value="1"/>
</dbReference>
<dbReference type="FunFam" id="2.170.270.10:FF:000006">
    <property type="entry name" value="Histone-lysine N-methyltransferase"/>
    <property type="match status" value="1"/>
</dbReference>
<dbReference type="Gene3D" id="1.10.10.1700">
    <property type="entry name" value="Histone-lysine N-methyltransferase"/>
    <property type="match status" value="1"/>
</dbReference>
<dbReference type="Gene3D" id="2.170.270.10">
    <property type="entry name" value="SET domain"/>
    <property type="match status" value="1"/>
</dbReference>
<dbReference type="InterPro" id="IPR041938">
    <property type="entry name" value="Hist-Lys_N-MTase_N"/>
</dbReference>
<dbReference type="InterPro" id="IPR044424">
    <property type="entry name" value="KMT5B_SET"/>
</dbReference>
<dbReference type="InterPro" id="IPR001214">
    <property type="entry name" value="SET_dom"/>
</dbReference>
<dbReference type="InterPro" id="IPR046341">
    <property type="entry name" value="SET_dom_sf"/>
</dbReference>
<dbReference type="InterPro" id="IPR039977">
    <property type="entry name" value="Suv4-20/Set9"/>
</dbReference>
<dbReference type="InterPro" id="IPR025790">
    <property type="entry name" value="Suv4-20_animal"/>
</dbReference>
<dbReference type="PANTHER" id="PTHR12977:SF12">
    <property type="entry name" value="HISTONE-LYSINE N-METHYLTRANSFERASE KMT5B"/>
    <property type="match status" value="1"/>
</dbReference>
<dbReference type="PANTHER" id="PTHR12977">
    <property type="entry name" value="SUPPRESSOR OF VARIEGATION 4-20-RELATED"/>
    <property type="match status" value="1"/>
</dbReference>
<dbReference type="Pfam" id="PF00856">
    <property type="entry name" value="SET"/>
    <property type="match status" value="1"/>
</dbReference>
<dbReference type="SMART" id="SM00317">
    <property type="entry name" value="SET"/>
    <property type="match status" value="1"/>
</dbReference>
<dbReference type="SUPFAM" id="SSF82199">
    <property type="entry name" value="SET domain"/>
    <property type="match status" value="1"/>
</dbReference>
<dbReference type="PROSITE" id="PS51570">
    <property type="entry name" value="SAM_MT43_SUVAR420_2"/>
    <property type="match status" value="1"/>
</dbReference>
<dbReference type="PROSITE" id="PS50280">
    <property type="entry name" value="SET"/>
    <property type="match status" value="1"/>
</dbReference>
<organism>
    <name type="scientific">Homo sapiens</name>
    <name type="common">Human</name>
    <dbReference type="NCBI Taxonomy" id="9606"/>
    <lineage>
        <taxon>Eukaryota</taxon>
        <taxon>Metazoa</taxon>
        <taxon>Chordata</taxon>
        <taxon>Craniata</taxon>
        <taxon>Vertebrata</taxon>
        <taxon>Euteleostomi</taxon>
        <taxon>Mammalia</taxon>
        <taxon>Eutheria</taxon>
        <taxon>Euarchontoglires</taxon>
        <taxon>Primates</taxon>
        <taxon>Haplorrhini</taxon>
        <taxon>Catarrhini</taxon>
        <taxon>Hominidae</taxon>
        <taxon>Homo</taxon>
    </lineage>
</organism>
<accession>Q4FZB7</accession>
<accession>A0A0A0MT19</accession>
<accession>B7WNX7</accession>
<accession>Q3SX56</accession>
<accession>Q4V775</accession>
<accession>Q6P150</accession>
<accession>Q96E44</accession>
<accession>Q9BUL0</accession>
<accession>Q9H022</accession>
<accession>Q9H2K3</accession>
<accession>Q9NXV3</accession>
<accession>Q9Y393</accession>
<protein>
    <recommendedName>
        <fullName evidence="16">Histone-lysine N-methyltransferase KMT5B</fullName>
    </recommendedName>
    <alternativeName>
        <fullName>Lysine N-methyltransferase 5B</fullName>
    </alternativeName>
    <alternativeName>
        <fullName evidence="17">Lysine-specific methyltransferase 5B</fullName>
    </alternativeName>
    <alternativeName>
        <fullName>Suppressor of variegation 4-20 homolog 1</fullName>
        <shortName>Su(var)4-20 homolog 1</shortName>
        <shortName>Suv4-20h1</shortName>
    </alternativeName>
    <alternativeName>
        <fullName evidence="16">[histone H4]-N-methyl-L-lysine20 N-methyltransferase KMT5B</fullName>
        <ecNumber evidence="9 10">2.1.1.362</ecNumber>
    </alternativeName>
    <alternativeName>
        <fullName evidence="16">[histone H4]-lysine20 N-methyltransferase KMT5B</fullName>
        <ecNumber evidence="9">2.1.1.361</ecNumber>
    </alternativeName>
</protein>
<gene>
    <name evidence="17" type="primary">KMT5B</name>
    <name type="synonym">SUV420H1</name>
    <name type="ORF">CGI-85</name>
</gene>
<proteinExistence type="evidence at protein level"/>
<keyword id="KW-0002">3D-structure</keyword>
<keyword id="KW-0025">Alternative splicing</keyword>
<keyword id="KW-0156">Chromatin regulator</keyword>
<keyword id="KW-0158">Chromosome</keyword>
<keyword id="KW-0225">Disease variant</keyword>
<keyword id="KW-0991">Intellectual disability</keyword>
<keyword id="KW-1017">Isopeptide bond</keyword>
<keyword id="KW-0479">Metal-binding</keyword>
<keyword id="KW-0489">Methyltransferase</keyword>
<keyword id="KW-0517">Myogenesis</keyword>
<keyword id="KW-0539">Nucleus</keyword>
<keyword id="KW-1267">Proteomics identification</keyword>
<keyword id="KW-1185">Reference proteome</keyword>
<keyword id="KW-0678">Repressor</keyword>
<keyword id="KW-0949">S-adenosyl-L-methionine</keyword>
<keyword id="KW-0804">Transcription</keyword>
<keyword id="KW-0805">Transcription regulation</keyword>
<keyword id="KW-0808">Transferase</keyword>
<keyword id="KW-0832">Ubl conjugation</keyword>
<keyword id="KW-0862">Zinc</keyword>
<name>KMT5B_HUMAN</name>